<evidence type="ECO:0000305" key="1"/>
<accession>B0YPM1</accession>
<reference key="1">
    <citation type="journal article" date="2008" name="Mol. Biol. Evol.">
        <title>Functional gene losses occur with minimal size reduction in the plastid genome of the parasitic liverwort Aneura mirabilis.</title>
        <authorList>
            <person name="Wickett N.J."/>
            <person name="Zhang Y."/>
            <person name="Hansen S.K."/>
            <person name="Roper J.M."/>
            <person name="Kuehl J.V."/>
            <person name="Plock S.A."/>
            <person name="Wolf P.G."/>
            <person name="dePamphilis C.W."/>
            <person name="Boore J.L."/>
            <person name="Goffinet B."/>
        </authorList>
    </citation>
    <scope>NUCLEOTIDE SEQUENCE [LARGE SCALE GENOMIC DNA]</scope>
</reference>
<sequence length="239" mass="27086">MKQKSWDIHLEEMMEAGIHFGHQVRKWNPKMAPFIFTERKSVHIINLTQTARFLSEACDLAANAASRGKQFLIVGTKYQAADLVVSAASGARCHYINQKWLGGMLTNWSTIETRLQKFRNLEKEKLAGIFERLPKKEVADSERRLSRLRKYFGGIKYMTALPDIVIIIDQRKEFTAIRECITLGIPTICLVDTDCDPNVTDIPIPANDDARASIKWISNKLTLAICEGRLNSNANCMNS</sequence>
<feature type="chain" id="PRO_0000352090" description="Small ribosomal subunit protein uS2c">
    <location>
        <begin position="1"/>
        <end position="239"/>
    </location>
</feature>
<keyword id="KW-0934">Plastid</keyword>
<keyword id="KW-0687">Ribonucleoprotein</keyword>
<keyword id="KW-0689">Ribosomal protein</keyword>
<gene>
    <name type="primary">rps2</name>
</gene>
<name>RR2_ANEMR</name>
<geneLocation type="non-photosynthetic plastid"/>
<comment type="subcellular location">
    <subcellularLocation>
        <location>Plastid</location>
    </subcellularLocation>
</comment>
<comment type="similarity">
    <text evidence="1">Belongs to the universal ribosomal protein uS2 family.</text>
</comment>
<organism>
    <name type="scientific">Aneura mirabilis</name>
    <name type="common">Parasitic liverwort</name>
    <name type="synonym">Cryptothallus mirabilis</name>
    <dbReference type="NCBI Taxonomy" id="280810"/>
    <lineage>
        <taxon>Eukaryota</taxon>
        <taxon>Viridiplantae</taxon>
        <taxon>Streptophyta</taxon>
        <taxon>Embryophyta</taxon>
        <taxon>Marchantiophyta</taxon>
        <taxon>Jungermanniopsida</taxon>
        <taxon>Metzgeriidae</taxon>
        <taxon>Metzgeriales</taxon>
        <taxon>Aneuraceae</taxon>
        <taxon>Aneura</taxon>
    </lineage>
</organism>
<proteinExistence type="inferred from homology"/>
<dbReference type="EMBL" id="EU043314">
    <property type="protein sequence ID" value="ABS54468.1"/>
    <property type="molecule type" value="Genomic_DNA"/>
</dbReference>
<dbReference type="RefSeq" id="YP_001687207.1">
    <property type="nucleotide sequence ID" value="NC_010359.1"/>
</dbReference>
<dbReference type="SMR" id="B0YPM1"/>
<dbReference type="GeneID" id="5952230"/>
<dbReference type="GO" id="GO:0005763">
    <property type="term" value="C:mitochondrial small ribosomal subunit"/>
    <property type="evidence" value="ECO:0007669"/>
    <property type="project" value="TreeGrafter"/>
</dbReference>
<dbReference type="GO" id="GO:0009536">
    <property type="term" value="C:plastid"/>
    <property type="evidence" value="ECO:0007669"/>
    <property type="project" value="UniProtKB-SubCell"/>
</dbReference>
<dbReference type="GO" id="GO:0003735">
    <property type="term" value="F:structural constituent of ribosome"/>
    <property type="evidence" value="ECO:0007669"/>
    <property type="project" value="InterPro"/>
</dbReference>
<dbReference type="GO" id="GO:0006412">
    <property type="term" value="P:translation"/>
    <property type="evidence" value="ECO:0007669"/>
    <property type="project" value="InterPro"/>
</dbReference>
<dbReference type="CDD" id="cd01425">
    <property type="entry name" value="RPS2"/>
    <property type="match status" value="1"/>
</dbReference>
<dbReference type="FunFam" id="1.10.287.610:FF:000001">
    <property type="entry name" value="30S ribosomal protein S2"/>
    <property type="match status" value="1"/>
</dbReference>
<dbReference type="Gene3D" id="3.40.50.10490">
    <property type="entry name" value="Glucose-6-phosphate isomerase like protein, domain 1"/>
    <property type="match status" value="1"/>
</dbReference>
<dbReference type="Gene3D" id="1.10.287.610">
    <property type="entry name" value="Helix hairpin bin"/>
    <property type="match status" value="1"/>
</dbReference>
<dbReference type="HAMAP" id="MF_00291_B">
    <property type="entry name" value="Ribosomal_uS2_B"/>
    <property type="match status" value="1"/>
</dbReference>
<dbReference type="InterPro" id="IPR001865">
    <property type="entry name" value="Ribosomal_uS2"/>
</dbReference>
<dbReference type="InterPro" id="IPR005706">
    <property type="entry name" value="Ribosomal_uS2_bac/mit/plastid"/>
</dbReference>
<dbReference type="InterPro" id="IPR018130">
    <property type="entry name" value="Ribosomal_uS2_CS"/>
</dbReference>
<dbReference type="InterPro" id="IPR023591">
    <property type="entry name" value="Ribosomal_uS2_flav_dom_sf"/>
</dbReference>
<dbReference type="NCBIfam" id="TIGR01011">
    <property type="entry name" value="rpsB_bact"/>
    <property type="match status" value="1"/>
</dbReference>
<dbReference type="PANTHER" id="PTHR12534">
    <property type="entry name" value="30S RIBOSOMAL PROTEIN S2 PROKARYOTIC AND ORGANELLAR"/>
    <property type="match status" value="1"/>
</dbReference>
<dbReference type="PANTHER" id="PTHR12534:SF0">
    <property type="entry name" value="SMALL RIBOSOMAL SUBUNIT PROTEIN US2M"/>
    <property type="match status" value="1"/>
</dbReference>
<dbReference type="Pfam" id="PF00318">
    <property type="entry name" value="Ribosomal_S2"/>
    <property type="match status" value="1"/>
</dbReference>
<dbReference type="PRINTS" id="PR00395">
    <property type="entry name" value="RIBOSOMALS2"/>
</dbReference>
<dbReference type="SUPFAM" id="SSF52313">
    <property type="entry name" value="Ribosomal protein S2"/>
    <property type="match status" value="1"/>
</dbReference>
<dbReference type="PROSITE" id="PS00963">
    <property type="entry name" value="RIBOSOMAL_S2_2"/>
    <property type="match status" value="1"/>
</dbReference>
<protein>
    <recommendedName>
        <fullName evidence="1">Small ribosomal subunit protein uS2c</fullName>
    </recommendedName>
    <alternativeName>
        <fullName>30S ribosomal protein S2, plastid</fullName>
    </alternativeName>
</protein>